<sequence length="211" mass="22118">MKAISRVLIAMVAAIAALFTSTGTSHAGLDNELSLVDGQDRTLTVQQWDTFLNGVFPLDRNRLTREWFHSGRAKYIVAGPGADEFEGTLELGYQIGFPWSLGVGINFSYTTPNILIDDGDITAPPFGLNSVITPNLFPGVSISADLGNGPGIQEVATFSVDVSGAEGGVAVSNAHGTVTGAAGGVLLRPFARLIASTGDSVTTYGEPWNMN</sequence>
<reference key="1">
    <citation type="journal article" date="1999" name="Mol. Microbiol.">
        <title>Cloning of the mspA gene encoding a porin from Mycobacterium smegmatis.</title>
        <authorList>
            <person name="Niederweis M."/>
            <person name="Ehrt S."/>
            <person name="Heinz C."/>
            <person name="Kloecker U."/>
            <person name="Swiderek K."/>
            <person name="Riley L.W."/>
            <person name="Benz R."/>
        </authorList>
    </citation>
    <scope>NUCLEOTIDE SEQUENCE [GENOMIC DNA]</scope>
    <scope>PROTEIN SEQUENCE OF 28-72 AND 193-211</scope>
    <scope>FUNCTION AS A PORIN</scope>
    <scope>MASS SPECTROMETRY</scope>
    <scope>SUBUNIT</scope>
    <source>
        <strain>ATCC 700084 / mc(2)155</strain>
    </source>
</reference>
<reference key="2">
    <citation type="submission" date="2006-10" db="EMBL/GenBank/DDBJ databases">
        <authorList>
            <person name="Fleischmann R.D."/>
            <person name="Dodson R.J."/>
            <person name="Haft D.H."/>
            <person name="Merkel J.S."/>
            <person name="Nelson W.C."/>
            <person name="Fraser C.M."/>
        </authorList>
    </citation>
    <scope>NUCLEOTIDE SEQUENCE [LARGE SCALE GENOMIC DNA]</scope>
    <source>
        <strain>ATCC 700084 / mc(2)155</strain>
    </source>
</reference>
<reference key="3">
    <citation type="journal article" date="2007" name="Genome Biol.">
        <title>Interrupted coding sequences in Mycobacterium smegmatis: authentic mutations or sequencing errors?</title>
        <authorList>
            <person name="Deshayes C."/>
            <person name="Perrodou E."/>
            <person name="Gallien S."/>
            <person name="Euphrasie D."/>
            <person name="Schaeffer C."/>
            <person name="Van-Dorsselaer A."/>
            <person name="Poch O."/>
            <person name="Lecompte O."/>
            <person name="Reyrat J.-M."/>
        </authorList>
    </citation>
    <scope>NUCLEOTIDE SEQUENCE [LARGE SCALE GENOMIC DNA]</scope>
    <source>
        <strain>ATCC 700084 / mc(2)155</strain>
    </source>
</reference>
<reference key="4">
    <citation type="journal article" date="2009" name="Genome Res.">
        <title>Ortho-proteogenomics: multiple proteomes investigation through orthology and a new MS-based protocol.</title>
        <authorList>
            <person name="Gallien S."/>
            <person name="Perrodou E."/>
            <person name="Carapito C."/>
            <person name="Deshayes C."/>
            <person name="Reyrat J.-M."/>
            <person name="Van Dorsselaer A."/>
            <person name="Poch O."/>
            <person name="Schaeffer C."/>
            <person name="Lecompte O."/>
        </authorList>
    </citation>
    <scope>NUCLEOTIDE SEQUENCE [LARGE SCALE GENOMIC DNA]</scope>
    <source>
        <strain>ATCC 700084 / mc(2)155</strain>
    </source>
</reference>
<reference key="5">
    <citation type="journal article" date="2001" name="Mol. Microbiol.">
        <title>MspA provides the main hydrophilic pathway through the cell wall of Mycobacterium smegmatis.</title>
        <authorList>
            <person name="Stahl C."/>
            <person name="Kubetzko S."/>
            <person name="Kaps I."/>
            <person name="Seeber S."/>
            <person name="Engelhardt H."/>
            <person name="Niederweis M."/>
        </authorList>
    </citation>
    <scope>SUBCELLULAR LOCATION IN CELL WALL</scope>
    <scope>DISRUPTION PHENOTYPE</scope>
    <source>
        <strain>ATCC 700084 / mc(2)155</strain>
    </source>
</reference>
<reference key="6">
    <citation type="journal article" date="2005" name="Mol. Microbiol.">
        <title>The growth rate of Mycobacterium smegmatis depends on sufficient porin-mediated influx of nutrients.</title>
        <authorList>
            <person name="Stephan J."/>
            <person name="Bender J."/>
            <person name="Wolschendorf F."/>
            <person name="Hoffmann C."/>
            <person name="Roth E."/>
            <person name="Mailander C."/>
            <person name="Engelhardt H."/>
            <person name="Niederweis M."/>
        </authorList>
    </citation>
    <scope>FUNCTION AS A PORIN</scope>
    <scope>INDUCTION</scope>
    <scope>DISRUPTION PHENOTYPE</scope>
    <source>
        <strain>ATCC 700084 / mc(2)155</strain>
    </source>
</reference>
<reference key="7">
    <citation type="journal article" date="2006" name="J. Biol. Chem.">
        <title>Topology of the porin MspA in the outer membrane of Mycobacterium smegmatis.</title>
        <authorList>
            <person name="Mahfoud M."/>
            <person name="Sukumaran S."/>
            <person name="Hulsmann P."/>
            <person name="Grieger K."/>
            <person name="Niederweis M."/>
        </authorList>
    </citation>
    <scope>TOPOLOGY</scope>
    <scope>DOMAIN</scope>
    <scope>CYSTEINE SCANNING STUDIES</scope>
    <source>
        <strain>ATCC 700084 / mc(2)155</strain>
    </source>
</reference>
<reference key="8">
    <citation type="journal article" date="2007" name="J. Bacteriol.">
        <title>Porins are required for uptake of phosphates by Mycobacterium smegmatis.</title>
        <authorList>
            <person name="Wolschendorf F."/>
            <person name="Mahfoud M."/>
            <person name="Niederweis M."/>
        </authorList>
    </citation>
    <scope>FUNCTION IN PHOSPHATE UPTAKE</scope>
    <scope>DISRUPTION PHENOTYPE</scope>
    <source>
        <strain>ATCC 700084 / mc(2)155</strain>
    </source>
</reference>
<reference key="9">
    <citation type="journal article" date="2008" name="Antimicrob. Agents Chemother.">
        <title>Role of porins for uptake of antibiotics by Mycobacterium smegmatis.</title>
        <authorList>
            <person name="Danilchanka O."/>
            <person name="Pavlenok M."/>
            <person name="Niederweis M."/>
        </authorList>
    </citation>
    <scope>FUNCTION IN ANTIBIOTIC UPTAKE</scope>
    <scope>DISRUPTION PHENOTYPE</scope>
    <source>
        <strain>ATCC 700084 / mc(2)155</strain>
    </source>
</reference>
<reference key="10">
    <citation type="journal article" date="2010" name="J. Bacteriol.">
        <title>Role of porins in iron uptake by Mycobacterium smegmatis.</title>
        <authorList>
            <person name="Jones C.M."/>
            <person name="Niederweis M."/>
        </authorList>
    </citation>
    <scope>FUNCTION IN IRON UPTAKE</scope>
    <scope>DISRUPTION PHENOTYPE</scope>
    <source>
        <strain>ATCC 700084 / mc(2)155</strain>
    </source>
</reference>
<reference key="11">
    <citation type="journal article" date="2004" name="Science">
        <title>The structure of a mycobacterial outer-membrane channel.</title>
        <authorList>
            <person name="Faller M."/>
            <person name="Niederweis M."/>
            <person name="Schulz G.E."/>
        </authorList>
    </citation>
    <scope>X-RAY CRYSTALLOGRAPHY (2.50 ANGSTROMS) OF 28-211</scope>
    <scope>SUBUNIT</scope>
    <scope>SUBCELLULAR LOCATION IN OUTER MEMBRANE</scope>
    <scope>MUTAGENESIS OF GLY-96</scope>
</reference>
<reference key="12">
    <citation type="journal article" date="2008" name="Science">
        <title>Designed protein-protein association.</title>
        <authorList>
            <person name="Grueninger D."/>
            <person name="Treiber N."/>
            <person name="Ziegler M.O."/>
            <person name="Koetter J.W."/>
            <person name="Schulze M.S."/>
            <person name="Schulz G.E."/>
        </authorList>
    </citation>
    <scope>X-RAY CRYSTALLOGRAPHY (2.59 ANGSTROMS) OF 28-207</scope>
</reference>
<proteinExistence type="evidence at protein level"/>
<evidence type="ECO:0000269" key="1">
    <source>
    </source>
</evidence>
<evidence type="ECO:0000269" key="2">
    <source>
    </source>
</evidence>
<evidence type="ECO:0000269" key="3">
    <source>
    </source>
</evidence>
<evidence type="ECO:0000269" key="4">
    <source>
    </source>
</evidence>
<evidence type="ECO:0000269" key="5">
    <source>
    </source>
</evidence>
<evidence type="ECO:0000269" key="6">
    <source>
    </source>
</evidence>
<evidence type="ECO:0000269" key="7">
    <source>
    </source>
</evidence>
<evidence type="ECO:0000269" key="8">
    <source>
    </source>
</evidence>
<evidence type="ECO:0000305" key="9"/>
<evidence type="ECO:0007829" key="10">
    <source>
        <dbReference type="PDB" id="1UUN"/>
    </source>
</evidence>
<dbReference type="EMBL" id="AJ001442">
    <property type="protein sequence ID" value="CAB56052.1"/>
    <property type="molecule type" value="Genomic_DNA"/>
</dbReference>
<dbReference type="EMBL" id="CP000480">
    <property type="protein sequence ID" value="ABK74363.1"/>
    <property type="molecule type" value="Genomic_DNA"/>
</dbReference>
<dbReference type="EMBL" id="CP001663">
    <property type="protein sequence ID" value="AFP37419.1"/>
    <property type="molecule type" value="Genomic_DNA"/>
</dbReference>
<dbReference type="RefSeq" id="WP_011727317.1">
    <property type="nucleotide sequence ID" value="NZ_SIJM01000010.1"/>
</dbReference>
<dbReference type="RefSeq" id="YP_885367.1">
    <property type="nucleotide sequence ID" value="NC_008596.1"/>
</dbReference>
<dbReference type="PDB" id="1UUN">
    <property type="method" value="X-ray"/>
    <property type="resolution" value="2.50 A"/>
    <property type="chains" value="A/B=28-211"/>
</dbReference>
<dbReference type="PDB" id="2V9U">
    <property type="method" value="X-ray"/>
    <property type="resolution" value="2.59 A"/>
    <property type="chains" value="A/B/C/D/E/F/G/H=28-211"/>
</dbReference>
<dbReference type="PDBsum" id="1UUN"/>
<dbReference type="PDBsum" id="2V9U"/>
<dbReference type="SMR" id="A0QR29"/>
<dbReference type="STRING" id="246196.MSMEG_0965"/>
<dbReference type="TCDB" id="1.B.24.1.1">
    <property type="family name" value="the mycobacterial porin (mbp) family"/>
</dbReference>
<dbReference type="PaxDb" id="246196-MSMEI_0939"/>
<dbReference type="KEGG" id="msb:LJ00_04780"/>
<dbReference type="KEGG" id="msg:MSMEI_0939"/>
<dbReference type="KEGG" id="msm:MSMEG_0965"/>
<dbReference type="PATRIC" id="fig|246196.19.peg.953"/>
<dbReference type="eggNOG" id="ENOG5031B57">
    <property type="taxonomic scope" value="Bacteria"/>
</dbReference>
<dbReference type="OrthoDB" id="4569497at2"/>
<dbReference type="EvolutionaryTrace" id="A0QR29"/>
<dbReference type="Proteomes" id="UP000000757">
    <property type="component" value="Chromosome"/>
</dbReference>
<dbReference type="Proteomes" id="UP000006158">
    <property type="component" value="Chromosome"/>
</dbReference>
<dbReference type="GO" id="GO:0009279">
    <property type="term" value="C:cell outer membrane"/>
    <property type="evidence" value="ECO:0007669"/>
    <property type="project" value="UniProtKB-SubCell"/>
</dbReference>
<dbReference type="GO" id="GO:0005576">
    <property type="term" value="C:extracellular region"/>
    <property type="evidence" value="ECO:0007669"/>
    <property type="project" value="UniProtKB-KW"/>
</dbReference>
<dbReference type="GO" id="GO:0046930">
    <property type="term" value="C:pore complex"/>
    <property type="evidence" value="ECO:0007669"/>
    <property type="project" value="UniProtKB-KW"/>
</dbReference>
<dbReference type="GO" id="GO:0015288">
    <property type="term" value="F:porin activity"/>
    <property type="evidence" value="ECO:0007669"/>
    <property type="project" value="UniProtKB-KW"/>
</dbReference>
<dbReference type="GO" id="GO:0006826">
    <property type="term" value="P:iron ion transport"/>
    <property type="evidence" value="ECO:0007669"/>
    <property type="project" value="UniProtKB-KW"/>
</dbReference>
<dbReference type="Gene3D" id="2.60.40.1650">
    <property type="entry name" value="Porin MspA (Ig-like beta-sandwich domain)"/>
    <property type="match status" value="1"/>
</dbReference>
<dbReference type="Gene3D" id="2.10.300.10">
    <property type="entry name" value="Porin MspA ribbon domain"/>
    <property type="match status" value="1"/>
</dbReference>
<dbReference type="InterPro" id="IPR036435">
    <property type="entry name" value="Leukocidin/porin_MspA_sf"/>
</dbReference>
<dbReference type="InterPro" id="IPR015286">
    <property type="entry name" value="Porin_fam_mycobact-type"/>
</dbReference>
<dbReference type="Pfam" id="PF09203">
    <property type="entry name" value="MspA"/>
    <property type="match status" value="1"/>
</dbReference>
<dbReference type="SUPFAM" id="SSF56959">
    <property type="entry name" value="Leukocidin-like"/>
    <property type="match status" value="1"/>
</dbReference>
<feature type="signal peptide" evidence="1">
    <location>
        <begin position="1"/>
        <end position="27"/>
    </location>
</feature>
<feature type="chain" id="PRO_5000064285" description="Porin MspA">
    <location>
        <begin position="28"/>
        <end position="211"/>
    </location>
</feature>
<feature type="mutagenesis site" description="Increases yield of ordered crystals." evidence="3">
    <original>G</original>
    <variation>R</variation>
    <location>
        <position position="96"/>
    </location>
</feature>
<feature type="strand" evidence="10">
    <location>
        <begin position="29"/>
        <end position="36"/>
    </location>
</feature>
<feature type="strand" evidence="10">
    <location>
        <begin position="42"/>
        <end position="55"/>
    </location>
</feature>
<feature type="strand" evidence="10">
    <location>
        <begin position="65"/>
        <end position="79"/>
    </location>
</feature>
<feature type="helix" evidence="10">
    <location>
        <begin position="82"/>
        <end position="84"/>
    </location>
</feature>
<feature type="strand" evidence="10">
    <location>
        <begin position="86"/>
        <end position="96"/>
    </location>
</feature>
<feature type="strand" evidence="10">
    <location>
        <begin position="98"/>
        <end position="110"/>
    </location>
</feature>
<feature type="strand" evidence="10">
    <location>
        <begin position="115"/>
        <end position="119"/>
    </location>
</feature>
<feature type="turn" evidence="10">
    <location>
        <begin position="124"/>
        <end position="129"/>
    </location>
</feature>
<feature type="strand" evidence="10">
    <location>
        <begin position="130"/>
        <end position="132"/>
    </location>
</feature>
<feature type="strand" evidence="10">
    <location>
        <begin position="139"/>
        <end position="148"/>
    </location>
</feature>
<feature type="strand" evidence="10">
    <location>
        <begin position="153"/>
        <end position="178"/>
    </location>
</feature>
<feature type="strand" evidence="10">
    <location>
        <begin position="180"/>
        <end position="183"/>
    </location>
</feature>
<feature type="strand" evidence="10">
    <location>
        <begin position="186"/>
        <end position="195"/>
    </location>
</feature>
<feature type="strand" evidence="10">
    <location>
        <begin position="200"/>
        <end position="204"/>
    </location>
</feature>
<accession>A0QR29</accession>
<accession>I7G4H6</accession>
<accession>Q9RLP7</accession>
<comment type="function">
    <text evidence="1 4 6 7 8">The major porin in this organism, forms a water-filled channel which favors the permeation of cations, amino acids, iron Fe(3+) and less efficiently phosphate. Does not transport Fe-ExoMS, the predominant siderophore. Plays a role in transport of beta-lactamase and hydrophilic fluoroquinolone antibiotics such as norfloxacin as well as chloramphenicol. There are about 2400 porins in wild-type, 800 in an mspA deletion and 150 in a double mspA-mspC deletion. Different conductance values with maxima at 2.3 and 4.6 nanosiemens might be caused by a simultaneous reconstitution of MspA channels into the membrane or by the existence of different MspA conformations.</text>
</comment>
<comment type="subunit">
    <text evidence="1 3">Forms very stable octamers. Isolated as a 100 kDa complex that can be reduced to monomers upon boiling in 80% dimethyl sulfoxide for 15 minutes. Structures show a goblet with the wide end on the exterior of the outer membrane and a central channel. It is not known if mixed oligomers of MspA with other Msp subunits form in vivo.</text>
</comment>
<comment type="subcellular location">
    <subcellularLocation>
        <location>Cell outer membrane</location>
    </subcellularLocation>
    <subcellularLocation>
        <location>Secreted</location>
        <location>Cell wall</location>
    </subcellularLocation>
</comment>
<comment type="induction">
    <text evidence="4">Constitutively expressed.</text>
</comment>
<comment type="domain">
    <text evidence="5">The rim domain (28-96 and 152-211) is accessible from the external milieu and is partially embedded in the outer membrane. The stem domain (131-148) is inaccessible from the outside and embedded in the outer membrane, while loop 6 (121-127) is thought to be in the periplasm.</text>
</comment>
<comment type="mass spectrometry" mass="19406.0" error="2.0" method="MALDI" evidence="1"/>
<comment type="disruption phenotype">
    <text evidence="2 4 6 7 8">Single deletion has decreased permeability to the antibiotic cephaloridine (9-fold), glucose (4-fold), serine, phosphate and iron Fe(3+). Growth rates are wild-type, due to the other Msp-type porins. A double mspA-mspC deletion takes up less cephaloridine, glucose, serine and phosphate than the single mspA deletion and grows slower than wt or single mspA deletion. A triple mspA-mspC-mspD deletion grows even slower and has reduced Fe(3+) transport compared to wild-type.</text>
</comment>
<comment type="similarity">
    <text evidence="9">Belongs to the mycobacterial porin (TC 1.B.24) family.</text>
</comment>
<protein>
    <recommendedName>
        <fullName>Porin MspA</fullName>
    </recommendedName>
</protein>
<keyword id="KW-0002">3D-structure</keyword>
<keyword id="KW-0998">Cell outer membrane</keyword>
<keyword id="KW-0134">Cell wall</keyword>
<keyword id="KW-0903">Direct protein sequencing</keyword>
<keyword id="KW-0406">Ion transport</keyword>
<keyword id="KW-0408">Iron</keyword>
<keyword id="KW-0410">Iron transport</keyword>
<keyword id="KW-0472">Membrane</keyword>
<keyword id="KW-0626">Porin</keyword>
<keyword id="KW-1185">Reference proteome</keyword>
<keyword id="KW-0964">Secreted</keyword>
<keyword id="KW-0732">Signal</keyword>
<keyword id="KW-0812">Transmembrane</keyword>
<keyword id="KW-1134">Transmembrane beta strand</keyword>
<keyword id="KW-0813">Transport</keyword>
<name>MSPA_MYCS2</name>
<organism>
    <name type="scientific">Mycolicibacterium smegmatis (strain ATCC 700084 / mc(2)155)</name>
    <name type="common">Mycobacterium smegmatis</name>
    <dbReference type="NCBI Taxonomy" id="246196"/>
    <lineage>
        <taxon>Bacteria</taxon>
        <taxon>Bacillati</taxon>
        <taxon>Actinomycetota</taxon>
        <taxon>Actinomycetes</taxon>
        <taxon>Mycobacteriales</taxon>
        <taxon>Mycobacteriaceae</taxon>
        <taxon>Mycolicibacterium</taxon>
    </lineage>
</organism>
<gene>
    <name type="primary">mspA</name>
    <name type="ordered locus">MSMEG_0965</name>
    <name type="ordered locus">MSMEI_0939</name>
</gene>